<proteinExistence type="inferred from homology"/>
<sequence>MNNWVTTYENHNYGLVISSRIRLARNLAKIPFSHKLNIEESKKVIKNVENAFYTFSNTEEKFKSNYLWDKNDNEKNIYLEKHLISKNLIDNSSKAAFILDDKETISIMINEEDHVRIQCITGGLNLEEVYDVSEKIDDLLEENLEYAFDEKLGYLTACPTNVGTGLRASVMLHLPSLSLNNQINGFLNALAQVGMTIRGLYGEGSKAIGNIYQISNQVTLGRSEEEILSNLKALVLQIINQEIISRENLMKKYKYELEDKIYRALGVLKSAVLLNSSECLKLLSDVRLGVEMGIIKDVNGITLNKLLVESQPATIQKIYGESLSNKDRDFNRAKFVREKLAVNTA</sequence>
<organism>
    <name type="scientific">Clostridium kluyveri (strain NBRC 12016)</name>
    <dbReference type="NCBI Taxonomy" id="583346"/>
    <lineage>
        <taxon>Bacteria</taxon>
        <taxon>Bacillati</taxon>
        <taxon>Bacillota</taxon>
        <taxon>Clostridia</taxon>
        <taxon>Eubacteriales</taxon>
        <taxon>Clostridiaceae</taxon>
        <taxon>Clostridium</taxon>
    </lineage>
</organism>
<feature type="chain" id="PRO_1000147061" description="Protein-arginine kinase">
    <location>
        <begin position="1"/>
        <end position="345"/>
    </location>
</feature>
<feature type="domain" description="Phosphagen kinase C-terminal" evidence="1">
    <location>
        <begin position="15"/>
        <end position="245"/>
    </location>
</feature>
<feature type="short sequence motif" description="RDXXRA motif of the pArg binding pocket involved in allosteric regulation" evidence="1">
    <location>
        <begin position="328"/>
        <end position="333"/>
    </location>
</feature>
<feature type="binding site" evidence="1">
    <location>
        <begin position="18"/>
        <end position="22"/>
    </location>
    <ligand>
        <name>ATP</name>
        <dbReference type="ChEBI" id="CHEBI:30616"/>
    </ligand>
</feature>
<feature type="binding site" evidence="1">
    <location>
        <position position="82"/>
    </location>
    <ligand>
        <name>ATP</name>
        <dbReference type="ChEBI" id="CHEBI:30616"/>
    </ligand>
</feature>
<feature type="binding site" evidence="1">
    <location>
        <position position="116"/>
    </location>
    <ligand>
        <name>ATP</name>
        <dbReference type="ChEBI" id="CHEBI:30616"/>
    </ligand>
</feature>
<feature type="binding site" evidence="1">
    <location>
        <begin position="167"/>
        <end position="171"/>
    </location>
    <ligand>
        <name>ATP</name>
        <dbReference type="ChEBI" id="CHEBI:30616"/>
    </ligand>
</feature>
<feature type="binding site" evidence="1">
    <location>
        <begin position="198"/>
        <end position="203"/>
    </location>
    <ligand>
        <name>ATP</name>
        <dbReference type="ChEBI" id="CHEBI:30616"/>
    </ligand>
</feature>
<comment type="function">
    <text evidence="1">Catalyzes the specific phosphorylation of arginine residues in proteins.</text>
</comment>
<comment type="catalytic activity">
    <reaction evidence="1">
        <text>L-arginyl-[protein] + ATP = N(omega)-phospho-L-arginyl-[protein] + ADP + H(+)</text>
        <dbReference type="Rhea" id="RHEA:43384"/>
        <dbReference type="Rhea" id="RHEA-COMP:10532"/>
        <dbReference type="Rhea" id="RHEA-COMP:10533"/>
        <dbReference type="ChEBI" id="CHEBI:15378"/>
        <dbReference type="ChEBI" id="CHEBI:29965"/>
        <dbReference type="ChEBI" id="CHEBI:30616"/>
        <dbReference type="ChEBI" id="CHEBI:83226"/>
        <dbReference type="ChEBI" id="CHEBI:456216"/>
        <dbReference type="EC" id="2.7.14.1"/>
    </reaction>
</comment>
<comment type="activity regulation">
    <text evidence="1">Appears to be allosterically activated by the binding of pArg-containing polypeptides to the pArg-binding pocket localized in the C-terminal domain of McsB.</text>
</comment>
<comment type="similarity">
    <text evidence="1">Belongs to the ATP:guanido phosphotransferase family.</text>
</comment>
<dbReference type="EC" id="2.7.14.1" evidence="1"/>
<dbReference type="EMBL" id="AP009049">
    <property type="protein sequence ID" value="BAH05206.1"/>
    <property type="molecule type" value="Genomic_DNA"/>
</dbReference>
<dbReference type="RefSeq" id="WP_011988776.1">
    <property type="nucleotide sequence ID" value="NC_011837.1"/>
</dbReference>
<dbReference type="SMR" id="B9DY81"/>
<dbReference type="KEGG" id="ckr:CKR_0155"/>
<dbReference type="HOGENOM" id="CLU_066591_1_0_9"/>
<dbReference type="Proteomes" id="UP000007969">
    <property type="component" value="Chromosome"/>
</dbReference>
<dbReference type="GO" id="GO:0005615">
    <property type="term" value="C:extracellular space"/>
    <property type="evidence" value="ECO:0007669"/>
    <property type="project" value="TreeGrafter"/>
</dbReference>
<dbReference type="GO" id="GO:0005524">
    <property type="term" value="F:ATP binding"/>
    <property type="evidence" value="ECO:0007669"/>
    <property type="project" value="UniProtKB-KW"/>
</dbReference>
<dbReference type="GO" id="GO:0004111">
    <property type="term" value="F:creatine kinase activity"/>
    <property type="evidence" value="ECO:0007669"/>
    <property type="project" value="InterPro"/>
</dbReference>
<dbReference type="GO" id="GO:0004672">
    <property type="term" value="F:protein kinase activity"/>
    <property type="evidence" value="ECO:0007669"/>
    <property type="project" value="UniProtKB-UniRule"/>
</dbReference>
<dbReference type="GO" id="GO:0046314">
    <property type="term" value="P:phosphocreatine biosynthetic process"/>
    <property type="evidence" value="ECO:0007669"/>
    <property type="project" value="InterPro"/>
</dbReference>
<dbReference type="CDD" id="cd07930">
    <property type="entry name" value="bacterial_phosphagen_kinase"/>
    <property type="match status" value="1"/>
</dbReference>
<dbReference type="Gene3D" id="3.30.590.10">
    <property type="entry name" value="Glutamine synthetase/guanido kinase, catalytic domain"/>
    <property type="match status" value="1"/>
</dbReference>
<dbReference type="HAMAP" id="MF_00602">
    <property type="entry name" value="Prot_Arg_kinase"/>
    <property type="match status" value="1"/>
</dbReference>
<dbReference type="InterPro" id="IPR023660">
    <property type="entry name" value="Arg_Kinase"/>
</dbReference>
<dbReference type="InterPro" id="IPR000749">
    <property type="entry name" value="ATP-guanido_PTrfase"/>
</dbReference>
<dbReference type="InterPro" id="IPR022415">
    <property type="entry name" value="ATP-guanido_PTrfase_AS"/>
</dbReference>
<dbReference type="InterPro" id="IPR022414">
    <property type="entry name" value="ATP-guanido_PTrfase_cat"/>
</dbReference>
<dbReference type="InterPro" id="IPR014746">
    <property type="entry name" value="Gln_synth/guanido_kin_cat_dom"/>
</dbReference>
<dbReference type="NCBIfam" id="NF002194">
    <property type="entry name" value="PRK01059.1-4"/>
    <property type="match status" value="1"/>
</dbReference>
<dbReference type="PANTHER" id="PTHR11547:SF38">
    <property type="entry name" value="ARGININE KINASE 1-RELATED"/>
    <property type="match status" value="1"/>
</dbReference>
<dbReference type="PANTHER" id="PTHR11547">
    <property type="entry name" value="ARGININE OR CREATINE KINASE"/>
    <property type="match status" value="1"/>
</dbReference>
<dbReference type="Pfam" id="PF00217">
    <property type="entry name" value="ATP-gua_Ptrans"/>
    <property type="match status" value="1"/>
</dbReference>
<dbReference type="SUPFAM" id="SSF55931">
    <property type="entry name" value="Glutamine synthetase/guanido kinase"/>
    <property type="match status" value="1"/>
</dbReference>
<dbReference type="PROSITE" id="PS00112">
    <property type="entry name" value="PHOSPHAGEN_KINASE"/>
    <property type="match status" value="1"/>
</dbReference>
<dbReference type="PROSITE" id="PS51510">
    <property type="entry name" value="PHOSPHAGEN_KINASE_C"/>
    <property type="match status" value="1"/>
</dbReference>
<protein>
    <recommendedName>
        <fullName evidence="1">Protein-arginine kinase</fullName>
        <ecNumber evidence="1">2.7.14.1</ecNumber>
    </recommendedName>
</protein>
<evidence type="ECO:0000255" key="1">
    <source>
        <dbReference type="HAMAP-Rule" id="MF_00602"/>
    </source>
</evidence>
<reference key="1">
    <citation type="submission" date="2005-09" db="EMBL/GenBank/DDBJ databases">
        <title>Complete genome sequence of Clostridium kluyveri and comparative genomics of Clostridia species.</title>
        <authorList>
            <person name="Inui M."/>
            <person name="Nonaka H."/>
            <person name="Shinoda Y."/>
            <person name="Ikenaga Y."/>
            <person name="Abe M."/>
            <person name="Naito K."/>
            <person name="Vertes A.A."/>
            <person name="Yukawa H."/>
        </authorList>
    </citation>
    <scope>NUCLEOTIDE SEQUENCE [LARGE SCALE GENOMIC DNA]</scope>
    <source>
        <strain>NBRC 12016</strain>
    </source>
</reference>
<gene>
    <name evidence="1" type="primary">mcsB</name>
    <name type="ordered locus">CKR_0155</name>
</gene>
<name>MCSB_CLOK1</name>
<keyword id="KW-0021">Allosteric enzyme</keyword>
<keyword id="KW-0067">ATP-binding</keyword>
<keyword id="KW-0418">Kinase</keyword>
<keyword id="KW-0547">Nucleotide-binding</keyword>
<keyword id="KW-0808">Transferase</keyword>
<accession>B9DY81</accession>